<organism>
    <name type="scientific">Mycobacterium tuberculosis (strain ATCC 25618 / H37Rv)</name>
    <dbReference type="NCBI Taxonomy" id="83332"/>
    <lineage>
        <taxon>Bacteria</taxon>
        <taxon>Bacillati</taxon>
        <taxon>Actinomycetota</taxon>
        <taxon>Actinomycetes</taxon>
        <taxon>Mycobacteriales</taxon>
        <taxon>Mycobacteriaceae</taxon>
        <taxon>Mycobacterium</taxon>
        <taxon>Mycobacterium tuberculosis complex</taxon>
    </lineage>
</organism>
<proteinExistence type="inferred from homology"/>
<name>LPPN_MYCTU</name>
<sequence>MRLPGRHVLYALSAVTMLAACSSNGARGGIASTNMNPTNPPATAETATVSPTPAPQSARTETWINLQVGDCLADLPPADLSRITVTIVDCATAHSAEVYLRAPVAVDAAVVSMANRDCAAGFAPYTGQSVDTSPYSVAYLIDSHQDRTGADPTPSTVICLLQPANGQLLTGSARR</sequence>
<comment type="function">
    <text evidence="3">Probably involved in bacterial recognition and uptake by its host (human) (PubMed:25041568).</text>
</comment>
<comment type="subcellular location">
    <subcellularLocation>
        <location evidence="1">Cell membrane</location>
        <topology evidence="1">Lipid-anchor</topology>
    </subcellularLocation>
    <subcellularLocation>
        <location evidence="3">Cell surface</location>
    </subcellularLocation>
    <text evidence="3">Immunoelectron microscopy indicates this protein is displaced from the cell surface (PubMed:25041568).</text>
</comment>
<comment type="domain">
    <text evidence="3">Fragments of the mature protein (residues 61-80, 101-120 and 121-140) prevent uptake of M.tuberculosis by a human macrophage-like cell line (PubMed:25041568).</text>
</comment>
<evidence type="ECO:0000255" key="1">
    <source>
        <dbReference type="PROSITE-ProRule" id="PRU00303"/>
    </source>
</evidence>
<evidence type="ECO:0000256" key="2">
    <source>
        <dbReference type="SAM" id="MobiDB-lite"/>
    </source>
</evidence>
<evidence type="ECO:0000269" key="3">
    <source>
    </source>
</evidence>
<dbReference type="EMBL" id="AL123456">
    <property type="protein sequence ID" value="CCP45051.1"/>
    <property type="molecule type" value="Genomic_DNA"/>
</dbReference>
<dbReference type="PIR" id="B70730">
    <property type="entry name" value="B70730"/>
</dbReference>
<dbReference type="RefSeq" id="NP_216786.1">
    <property type="nucleotide sequence ID" value="NC_000962.3"/>
</dbReference>
<dbReference type="RefSeq" id="WP_003411668.1">
    <property type="nucleotide sequence ID" value="NZ_NVQJ01000008.1"/>
</dbReference>
<dbReference type="STRING" id="83332.Rv2270"/>
<dbReference type="PaxDb" id="83332-Rv2270"/>
<dbReference type="DNASU" id="887448"/>
<dbReference type="GeneID" id="887448"/>
<dbReference type="KEGG" id="mtu:Rv2270"/>
<dbReference type="KEGG" id="mtv:RVBD_2270"/>
<dbReference type="TubercuList" id="Rv2270"/>
<dbReference type="eggNOG" id="ENOG5030GWZ">
    <property type="taxonomic scope" value="Bacteria"/>
</dbReference>
<dbReference type="InParanoid" id="P9WK73"/>
<dbReference type="OrthoDB" id="3628931at2"/>
<dbReference type="Proteomes" id="UP000001584">
    <property type="component" value="Chromosome"/>
</dbReference>
<dbReference type="GO" id="GO:0009986">
    <property type="term" value="C:cell surface"/>
    <property type="evidence" value="ECO:0007669"/>
    <property type="project" value="UniProtKB-SubCell"/>
</dbReference>
<dbReference type="GO" id="GO:0005886">
    <property type="term" value="C:plasma membrane"/>
    <property type="evidence" value="ECO:0007669"/>
    <property type="project" value="UniProtKB-SubCell"/>
</dbReference>
<dbReference type="PROSITE" id="PS51257">
    <property type="entry name" value="PROKAR_LIPOPROTEIN"/>
    <property type="match status" value="1"/>
</dbReference>
<gene>
    <name type="primary">lppN</name>
    <name type="ordered locus">Rv2270</name>
    <name type="ORF">MTCY339.40c</name>
</gene>
<keyword id="KW-1003">Cell membrane</keyword>
<keyword id="KW-0449">Lipoprotein</keyword>
<keyword id="KW-0472">Membrane</keyword>
<keyword id="KW-0564">Palmitate</keyword>
<keyword id="KW-1185">Reference proteome</keyword>
<keyword id="KW-0732">Signal</keyword>
<protein>
    <recommendedName>
        <fullName>Putative lipoprotein LppN</fullName>
    </recommendedName>
</protein>
<accession>P9WK73</accession>
<accession>L0TC06</accession>
<accession>Q50693</accession>
<reference key="1">
    <citation type="journal article" date="1998" name="Nature">
        <title>Deciphering the biology of Mycobacterium tuberculosis from the complete genome sequence.</title>
        <authorList>
            <person name="Cole S.T."/>
            <person name="Brosch R."/>
            <person name="Parkhill J."/>
            <person name="Garnier T."/>
            <person name="Churcher C.M."/>
            <person name="Harris D.E."/>
            <person name="Gordon S.V."/>
            <person name="Eiglmeier K."/>
            <person name="Gas S."/>
            <person name="Barry C.E. III"/>
            <person name="Tekaia F."/>
            <person name="Badcock K."/>
            <person name="Basham D."/>
            <person name="Brown D."/>
            <person name="Chillingworth T."/>
            <person name="Connor R."/>
            <person name="Davies R.M."/>
            <person name="Devlin K."/>
            <person name="Feltwell T."/>
            <person name="Gentles S."/>
            <person name="Hamlin N."/>
            <person name="Holroyd S."/>
            <person name="Hornsby T."/>
            <person name="Jagels K."/>
            <person name="Krogh A."/>
            <person name="McLean J."/>
            <person name="Moule S."/>
            <person name="Murphy L.D."/>
            <person name="Oliver S."/>
            <person name="Osborne J."/>
            <person name="Quail M.A."/>
            <person name="Rajandream M.A."/>
            <person name="Rogers J."/>
            <person name="Rutter S."/>
            <person name="Seeger K."/>
            <person name="Skelton S."/>
            <person name="Squares S."/>
            <person name="Squares R."/>
            <person name="Sulston J.E."/>
            <person name="Taylor K."/>
            <person name="Whitehead S."/>
            <person name="Barrell B.G."/>
        </authorList>
    </citation>
    <scope>NUCLEOTIDE SEQUENCE [LARGE SCALE GENOMIC DNA]</scope>
    <source>
        <strain>ATCC 25618 / H37Rv</strain>
    </source>
</reference>
<reference key="2">
    <citation type="journal article" date="2014" name="Chem. Biol. Drug Des.">
        <title>Specific interaction between Mycobacterium tuberculosis lipoprotein-derived peptides and target cells inhibits mycobacterial entry in vitro.</title>
        <authorList>
            <person name="Ocampo M."/>
            <person name="Curtidor H."/>
            <person name="Vanegas M."/>
            <person name="Patarroyo M.A."/>
            <person name="Patarroyo M.E."/>
        </authorList>
    </citation>
    <scope>FUNCTION</scope>
    <scope>SUBCELLULAR LOCATION</scope>
    <scope>DOMAIN</scope>
</reference>
<feature type="signal peptide" evidence="1">
    <location>
        <begin position="1"/>
        <end position="20"/>
    </location>
</feature>
<feature type="chain" id="PRO_0000018113" description="Putative lipoprotein LppN">
    <location>
        <begin position="21"/>
        <end position="175"/>
    </location>
</feature>
<feature type="region of interest" description="Disordered" evidence="2">
    <location>
        <begin position="31"/>
        <end position="56"/>
    </location>
</feature>
<feature type="region of interest" description="Prevents bacterial uptake by a human macrophage-like cell line" evidence="3">
    <location>
        <begin position="61"/>
        <end position="80"/>
    </location>
</feature>
<feature type="region of interest" description="Prevents bacterial uptake by a human macrophage-like cell line" evidence="3">
    <location>
        <begin position="101"/>
        <end position="120"/>
    </location>
</feature>
<feature type="region of interest" description="Prevents bacterial uptake by a human macrophage-like cell line" evidence="3">
    <location>
        <begin position="121"/>
        <end position="140"/>
    </location>
</feature>
<feature type="compositionally biased region" description="Low complexity" evidence="2">
    <location>
        <begin position="33"/>
        <end position="48"/>
    </location>
</feature>
<feature type="lipid moiety-binding region" description="N-palmitoyl cysteine" evidence="1">
    <location>
        <position position="21"/>
    </location>
</feature>
<feature type="lipid moiety-binding region" description="S-diacylglycerol cysteine" evidence="1">
    <location>
        <position position="21"/>
    </location>
</feature>